<evidence type="ECO:0000250" key="1"/>
<evidence type="ECO:0000305" key="2"/>
<organism>
    <name type="scientific">Rickettsia prowazekii (strain Madrid E)</name>
    <dbReference type="NCBI Taxonomy" id="272947"/>
    <lineage>
        <taxon>Bacteria</taxon>
        <taxon>Pseudomonadati</taxon>
        <taxon>Pseudomonadota</taxon>
        <taxon>Alphaproteobacteria</taxon>
        <taxon>Rickettsiales</taxon>
        <taxon>Rickettsiaceae</taxon>
        <taxon>Rickettsieae</taxon>
        <taxon>Rickettsia</taxon>
        <taxon>typhus group</taxon>
    </lineage>
</organism>
<keyword id="KW-0030">Aminoacyl-tRNA synthetase</keyword>
<keyword id="KW-0067">ATP-binding</keyword>
<keyword id="KW-0963">Cytoplasm</keyword>
<keyword id="KW-0436">Ligase</keyword>
<keyword id="KW-0547">Nucleotide-binding</keyword>
<keyword id="KW-0648">Protein biosynthesis</keyword>
<keyword id="KW-1185">Reference proteome</keyword>
<reference key="1">
    <citation type="journal article" date="1998" name="Nature">
        <title>The genome sequence of Rickettsia prowazekii and the origin of mitochondria.</title>
        <authorList>
            <person name="Andersson S.G.E."/>
            <person name="Zomorodipour A."/>
            <person name="Andersson J.O."/>
            <person name="Sicheritz-Ponten T."/>
            <person name="Alsmark U.C.M."/>
            <person name="Podowski R.M."/>
            <person name="Naeslund A.K."/>
            <person name="Eriksson A.-S."/>
            <person name="Winkler H.H."/>
            <person name="Kurland C.G."/>
        </authorList>
    </citation>
    <scope>NUCLEOTIDE SEQUENCE [LARGE SCALE GENOMIC DNA]</scope>
    <source>
        <strain>Madrid E</strain>
    </source>
</reference>
<dbReference type="EC" id="6.1.1.6"/>
<dbReference type="EMBL" id="AJ235271">
    <property type="protein sequence ID" value="CAA14830.1"/>
    <property type="molecule type" value="Genomic_DNA"/>
</dbReference>
<dbReference type="PIR" id="D71694">
    <property type="entry name" value="D71694"/>
</dbReference>
<dbReference type="RefSeq" id="NP_220754.1">
    <property type="nucleotide sequence ID" value="NC_000963.1"/>
</dbReference>
<dbReference type="RefSeq" id="WP_004597521.1">
    <property type="nucleotide sequence ID" value="NC_000963.1"/>
</dbReference>
<dbReference type="SMR" id="Q9ZDF8"/>
<dbReference type="STRING" id="272947.gene:17555451"/>
<dbReference type="EnsemblBacteria" id="CAA14830">
    <property type="protein sequence ID" value="CAA14830"/>
    <property type="gene ID" value="CAA14830"/>
</dbReference>
<dbReference type="KEGG" id="rpr:RP371"/>
<dbReference type="PATRIC" id="fig|272947.5.peg.382"/>
<dbReference type="eggNOG" id="COG1384">
    <property type="taxonomic scope" value="Bacteria"/>
</dbReference>
<dbReference type="HOGENOM" id="CLU_025562_2_0_5"/>
<dbReference type="OrthoDB" id="9803151at2"/>
<dbReference type="Proteomes" id="UP000002480">
    <property type="component" value="Chromosome"/>
</dbReference>
<dbReference type="GO" id="GO:0005737">
    <property type="term" value="C:cytoplasm"/>
    <property type="evidence" value="ECO:0007669"/>
    <property type="project" value="UniProtKB-SubCell"/>
</dbReference>
<dbReference type="GO" id="GO:0005524">
    <property type="term" value="F:ATP binding"/>
    <property type="evidence" value="ECO:0007669"/>
    <property type="project" value="UniProtKB-UniRule"/>
</dbReference>
<dbReference type="GO" id="GO:0004824">
    <property type="term" value="F:lysine-tRNA ligase activity"/>
    <property type="evidence" value="ECO:0007669"/>
    <property type="project" value="UniProtKB-UniRule"/>
</dbReference>
<dbReference type="GO" id="GO:0000049">
    <property type="term" value="F:tRNA binding"/>
    <property type="evidence" value="ECO:0007669"/>
    <property type="project" value="InterPro"/>
</dbReference>
<dbReference type="GO" id="GO:0006430">
    <property type="term" value="P:lysyl-tRNA aminoacylation"/>
    <property type="evidence" value="ECO:0007669"/>
    <property type="project" value="UniProtKB-UniRule"/>
</dbReference>
<dbReference type="CDD" id="cd00674">
    <property type="entry name" value="LysRS_core_class_I"/>
    <property type="match status" value="1"/>
</dbReference>
<dbReference type="Gene3D" id="1.10.10.350">
    <property type="match status" value="1"/>
</dbReference>
<dbReference type="Gene3D" id="3.40.50.620">
    <property type="entry name" value="HUPs"/>
    <property type="match status" value="2"/>
</dbReference>
<dbReference type="HAMAP" id="MF_00177">
    <property type="entry name" value="Lys_tRNA_synth_class1"/>
    <property type="match status" value="1"/>
</dbReference>
<dbReference type="InterPro" id="IPR020751">
    <property type="entry name" value="aa-tRNA-synth_I_codon-bd_sub2"/>
</dbReference>
<dbReference type="InterPro" id="IPR001412">
    <property type="entry name" value="aa-tRNA-synth_I_CS"/>
</dbReference>
<dbReference type="InterPro" id="IPR008925">
    <property type="entry name" value="aa_tRNA-synth_I_cd-bd_sf"/>
</dbReference>
<dbReference type="InterPro" id="IPR002904">
    <property type="entry name" value="Lys-tRNA-ligase"/>
</dbReference>
<dbReference type="InterPro" id="IPR014729">
    <property type="entry name" value="Rossmann-like_a/b/a_fold"/>
</dbReference>
<dbReference type="NCBIfam" id="TIGR00467">
    <property type="entry name" value="lysS_arch"/>
    <property type="match status" value="1"/>
</dbReference>
<dbReference type="NCBIfam" id="NF001968">
    <property type="entry name" value="PRK00750.1-2"/>
    <property type="match status" value="1"/>
</dbReference>
<dbReference type="PANTHER" id="PTHR37940">
    <property type="entry name" value="LYSINE--TRNA LIGASE"/>
    <property type="match status" value="1"/>
</dbReference>
<dbReference type="PANTHER" id="PTHR37940:SF1">
    <property type="entry name" value="LYSINE--TRNA LIGASE"/>
    <property type="match status" value="1"/>
</dbReference>
<dbReference type="Pfam" id="PF01921">
    <property type="entry name" value="tRNA-synt_1f"/>
    <property type="match status" value="1"/>
</dbReference>
<dbReference type="SUPFAM" id="SSF48163">
    <property type="entry name" value="An anticodon-binding domain of class I aminoacyl-tRNA synthetases"/>
    <property type="match status" value="1"/>
</dbReference>
<dbReference type="SUPFAM" id="SSF52374">
    <property type="entry name" value="Nucleotidylyl transferase"/>
    <property type="match status" value="1"/>
</dbReference>
<dbReference type="PROSITE" id="PS00178">
    <property type="entry name" value="AA_TRNA_LIGASE_I"/>
    <property type="match status" value="1"/>
</dbReference>
<feature type="chain" id="PRO_0000152743" description="Lysine--tRNA ligase">
    <location>
        <begin position="1"/>
        <end position="528"/>
    </location>
</feature>
<feature type="short sequence motif" description="'HIGH' region">
    <location>
        <begin position="44"/>
        <end position="52"/>
    </location>
</feature>
<feature type="short sequence motif" description="'KMSKS' region">
    <location>
        <begin position="290"/>
        <end position="294"/>
    </location>
</feature>
<feature type="binding site" evidence="1">
    <location>
        <position position="293"/>
    </location>
    <ligand>
        <name>ATP</name>
        <dbReference type="ChEBI" id="CHEBI:30616"/>
    </ligand>
</feature>
<comment type="catalytic activity">
    <reaction>
        <text>tRNA(Lys) + L-lysine + ATP = L-lysyl-tRNA(Lys) + AMP + diphosphate</text>
        <dbReference type="Rhea" id="RHEA:20792"/>
        <dbReference type="Rhea" id="RHEA-COMP:9696"/>
        <dbReference type="Rhea" id="RHEA-COMP:9697"/>
        <dbReference type="ChEBI" id="CHEBI:30616"/>
        <dbReference type="ChEBI" id="CHEBI:32551"/>
        <dbReference type="ChEBI" id="CHEBI:33019"/>
        <dbReference type="ChEBI" id="CHEBI:78442"/>
        <dbReference type="ChEBI" id="CHEBI:78529"/>
        <dbReference type="ChEBI" id="CHEBI:456215"/>
        <dbReference type="EC" id="6.1.1.6"/>
    </reaction>
</comment>
<comment type="subcellular location">
    <subcellularLocation>
        <location evidence="1">Cytoplasm</location>
    </subcellularLocation>
</comment>
<comment type="similarity">
    <text evidence="2">Belongs to the class-I aminoacyl-tRNA synthetase family.</text>
</comment>
<accession>Q9ZDF8</accession>
<name>SYK_RICPR</name>
<sequence length="528" mass="60592">MSVVLEDAIRSNAWPFIEAKKILDSLNGKAPEKGYILFETGYGPSGLPHIGTFAENARMVMVQKAFEQLSDIPTKLICFSDDMDGLRKVPSNIPHPEMVAQYMDMPLTSIPDPFGKCKSYGHYMNAKLCAFLDKFGFKYEFYSSTNCYKAGMFDEMLIRVLEKYDEIMALMLPTFRDERKTTYAPFMPICPKTGKVLQVPIEKWDAKAGTVSYKDEDGNDVEVPVTGGHCKLQWKPDFGMRWAALKVDYEMYGKDHLANSRLYSEICRILGGKPPVQFCYELFLDANGEKISKSRGNSISVDDWLKYASVESIALFMYKNPARAKRLFFDLIPKNVDEYITLNQKYHLEEDMVTRFANPVYHIHHGNVPKIETFGLTYSLLLNLTAVCNTSDKSVLWGFITKYEPKATPNTSTYLDHLTEFAIRYYNDFIQTHKSYLVVSEKHKIILHDILDMLSNISDQTEEESIQKAIYDIGMKSGYENLRYYFKDLYQILLGQNEGPRLGTFIKLYGVEETKKLVEEKLLCHTVA</sequence>
<protein>
    <recommendedName>
        <fullName>Lysine--tRNA ligase</fullName>
        <ecNumber>6.1.1.6</ecNumber>
    </recommendedName>
    <alternativeName>
        <fullName>Lysyl-tRNA synthetase</fullName>
        <shortName>LysRS</shortName>
    </alternativeName>
</protein>
<gene>
    <name type="primary">lysS</name>
    <name type="ordered locus">RP371</name>
</gene>
<proteinExistence type="inferred from homology"/>